<comment type="similarity">
    <text evidence="1">Belongs to the universal ribosomal protein uS9 family.</text>
</comment>
<feature type="chain" id="PRO_1000051371" description="Small ribosomal subunit protein uS9">
    <location>
        <begin position="1"/>
        <end position="130"/>
    </location>
</feature>
<sequence>MAENQYYGTGRRKSSSARVFLKPGSGKIVINQRSLEVYFGRETARMVVNQPLELVDMVTKFDMYITVKGGGISGQAGAIRHGITRALMEYDESLRGELRKAGFVTRDAREVERKKVGLRKARRRPQFSKR</sequence>
<keyword id="KW-0687">Ribonucleoprotein</keyword>
<keyword id="KW-0689">Ribosomal protein</keyword>
<accession>A4THJ2</accession>
<evidence type="ECO:0000255" key="1">
    <source>
        <dbReference type="HAMAP-Rule" id="MF_00532"/>
    </source>
</evidence>
<evidence type="ECO:0000305" key="2"/>
<gene>
    <name evidence="1" type="primary">rpsI</name>
    <name type="ordered locus">YPDSF_0335</name>
</gene>
<reference key="1">
    <citation type="submission" date="2007-02" db="EMBL/GenBank/DDBJ databases">
        <title>Complete sequence of chromosome of Yersinia pestis Pestoides F.</title>
        <authorList>
            <consortium name="US DOE Joint Genome Institute"/>
            <person name="Copeland A."/>
            <person name="Lucas S."/>
            <person name="Lapidus A."/>
            <person name="Barry K."/>
            <person name="Detter J.C."/>
            <person name="Glavina del Rio T."/>
            <person name="Hammon N."/>
            <person name="Israni S."/>
            <person name="Dalin E."/>
            <person name="Tice H."/>
            <person name="Pitluck S."/>
            <person name="Di Bartolo G."/>
            <person name="Chain P."/>
            <person name="Malfatti S."/>
            <person name="Shin M."/>
            <person name="Vergez L."/>
            <person name="Schmutz J."/>
            <person name="Larimer F."/>
            <person name="Land M."/>
            <person name="Hauser L."/>
            <person name="Worsham P."/>
            <person name="Chu M."/>
            <person name="Bearden S."/>
            <person name="Garcia E."/>
            <person name="Richardson P."/>
        </authorList>
    </citation>
    <scope>NUCLEOTIDE SEQUENCE [LARGE SCALE GENOMIC DNA]</scope>
    <source>
        <strain>Pestoides F</strain>
    </source>
</reference>
<dbReference type="EMBL" id="CP000668">
    <property type="protein sequence ID" value="ABP38754.1"/>
    <property type="molecule type" value="Genomic_DNA"/>
</dbReference>
<dbReference type="RefSeq" id="WP_002210133.1">
    <property type="nucleotide sequence ID" value="NZ_CP009715.1"/>
</dbReference>
<dbReference type="SMR" id="A4THJ2"/>
<dbReference type="GeneID" id="96662997"/>
<dbReference type="KEGG" id="ypp:YPDSF_0335"/>
<dbReference type="PATRIC" id="fig|386656.14.peg.1636"/>
<dbReference type="GO" id="GO:0022627">
    <property type="term" value="C:cytosolic small ribosomal subunit"/>
    <property type="evidence" value="ECO:0007669"/>
    <property type="project" value="TreeGrafter"/>
</dbReference>
<dbReference type="GO" id="GO:0003723">
    <property type="term" value="F:RNA binding"/>
    <property type="evidence" value="ECO:0007669"/>
    <property type="project" value="TreeGrafter"/>
</dbReference>
<dbReference type="GO" id="GO:0003735">
    <property type="term" value="F:structural constituent of ribosome"/>
    <property type="evidence" value="ECO:0007669"/>
    <property type="project" value="InterPro"/>
</dbReference>
<dbReference type="GO" id="GO:0006412">
    <property type="term" value="P:translation"/>
    <property type="evidence" value="ECO:0007669"/>
    <property type="project" value="UniProtKB-UniRule"/>
</dbReference>
<dbReference type="FunFam" id="3.30.230.10:FF:000001">
    <property type="entry name" value="30S ribosomal protein S9"/>
    <property type="match status" value="1"/>
</dbReference>
<dbReference type="Gene3D" id="3.30.230.10">
    <property type="match status" value="1"/>
</dbReference>
<dbReference type="HAMAP" id="MF_00532_B">
    <property type="entry name" value="Ribosomal_uS9_B"/>
    <property type="match status" value="1"/>
</dbReference>
<dbReference type="InterPro" id="IPR020568">
    <property type="entry name" value="Ribosomal_Su5_D2-typ_SF"/>
</dbReference>
<dbReference type="InterPro" id="IPR000754">
    <property type="entry name" value="Ribosomal_uS9"/>
</dbReference>
<dbReference type="InterPro" id="IPR023035">
    <property type="entry name" value="Ribosomal_uS9_bac/plastid"/>
</dbReference>
<dbReference type="InterPro" id="IPR020574">
    <property type="entry name" value="Ribosomal_uS9_CS"/>
</dbReference>
<dbReference type="InterPro" id="IPR014721">
    <property type="entry name" value="Ribsml_uS5_D2-typ_fold_subgr"/>
</dbReference>
<dbReference type="NCBIfam" id="NF001099">
    <property type="entry name" value="PRK00132.1"/>
    <property type="match status" value="1"/>
</dbReference>
<dbReference type="PANTHER" id="PTHR21569">
    <property type="entry name" value="RIBOSOMAL PROTEIN S9"/>
    <property type="match status" value="1"/>
</dbReference>
<dbReference type="PANTHER" id="PTHR21569:SF1">
    <property type="entry name" value="SMALL RIBOSOMAL SUBUNIT PROTEIN US9M"/>
    <property type="match status" value="1"/>
</dbReference>
<dbReference type="Pfam" id="PF00380">
    <property type="entry name" value="Ribosomal_S9"/>
    <property type="match status" value="1"/>
</dbReference>
<dbReference type="SUPFAM" id="SSF54211">
    <property type="entry name" value="Ribosomal protein S5 domain 2-like"/>
    <property type="match status" value="1"/>
</dbReference>
<dbReference type="PROSITE" id="PS00360">
    <property type="entry name" value="RIBOSOMAL_S9"/>
    <property type="match status" value="1"/>
</dbReference>
<proteinExistence type="inferred from homology"/>
<organism>
    <name type="scientific">Yersinia pestis (strain Pestoides F)</name>
    <dbReference type="NCBI Taxonomy" id="386656"/>
    <lineage>
        <taxon>Bacteria</taxon>
        <taxon>Pseudomonadati</taxon>
        <taxon>Pseudomonadota</taxon>
        <taxon>Gammaproteobacteria</taxon>
        <taxon>Enterobacterales</taxon>
        <taxon>Yersiniaceae</taxon>
        <taxon>Yersinia</taxon>
    </lineage>
</organism>
<protein>
    <recommendedName>
        <fullName evidence="1">Small ribosomal subunit protein uS9</fullName>
    </recommendedName>
    <alternativeName>
        <fullName evidence="2">30S ribosomal protein S9</fullName>
    </alternativeName>
</protein>
<name>RS9_YERPP</name>